<reference key="1">
    <citation type="journal article" date="2000" name="Proc. Natl. Acad. Sci. U.S.A.">
        <title>Archaeal adaptation to higher temperatures revealed by genomic sequence of Thermoplasma volcanium.</title>
        <authorList>
            <person name="Kawashima T."/>
            <person name="Amano N."/>
            <person name="Koike H."/>
            <person name="Makino S."/>
            <person name="Higuchi S."/>
            <person name="Kawashima-Ohya Y."/>
            <person name="Watanabe K."/>
            <person name="Yamazaki M."/>
            <person name="Kanehori K."/>
            <person name="Kawamoto T."/>
            <person name="Nunoshiba T."/>
            <person name="Yamamoto Y."/>
            <person name="Aramaki H."/>
            <person name="Makino K."/>
            <person name="Suzuki M."/>
        </authorList>
    </citation>
    <scope>NUCLEOTIDE SEQUENCE [LARGE SCALE GENOMIC DNA]</scope>
    <source>
        <strain>ATCC 51530 / DSM 4299 / JCM 9571 / NBRC 15438 / GSS1</strain>
    </source>
</reference>
<feature type="chain" id="PRO_0000117328" description="A-type ATP synthase subunit E">
    <location>
        <begin position="1"/>
        <end position="185"/>
    </location>
</feature>
<dbReference type="EMBL" id="BA000011">
    <property type="protein sequence ID" value="BAB59190.1"/>
    <property type="status" value="ALT_INIT"/>
    <property type="molecule type" value="Genomic_DNA"/>
</dbReference>
<dbReference type="RefSeq" id="WP_010916305.1">
    <property type="nucleotide sequence ID" value="NC_002689.2"/>
</dbReference>
<dbReference type="SMR" id="Q97CQ3"/>
<dbReference type="STRING" id="273116.gene:9380813"/>
<dbReference type="PaxDb" id="273116-14324262"/>
<dbReference type="GeneID" id="1441535"/>
<dbReference type="KEGG" id="tvo:TVG0050546"/>
<dbReference type="eggNOG" id="arCOG00869">
    <property type="taxonomic scope" value="Archaea"/>
</dbReference>
<dbReference type="HOGENOM" id="CLU_1458252_0_0_2"/>
<dbReference type="OrthoDB" id="57284at2157"/>
<dbReference type="PhylomeDB" id="Q97CQ3"/>
<dbReference type="Proteomes" id="UP000001017">
    <property type="component" value="Chromosome"/>
</dbReference>
<dbReference type="GO" id="GO:0005886">
    <property type="term" value="C:plasma membrane"/>
    <property type="evidence" value="ECO:0007669"/>
    <property type="project" value="UniProtKB-SubCell"/>
</dbReference>
<dbReference type="GO" id="GO:0033178">
    <property type="term" value="C:proton-transporting two-sector ATPase complex, catalytic domain"/>
    <property type="evidence" value="ECO:0007669"/>
    <property type="project" value="InterPro"/>
</dbReference>
<dbReference type="GO" id="GO:0005524">
    <property type="term" value="F:ATP binding"/>
    <property type="evidence" value="ECO:0007669"/>
    <property type="project" value="UniProtKB-UniRule"/>
</dbReference>
<dbReference type="GO" id="GO:0046933">
    <property type="term" value="F:proton-transporting ATP synthase activity, rotational mechanism"/>
    <property type="evidence" value="ECO:0007669"/>
    <property type="project" value="UniProtKB-UniRule"/>
</dbReference>
<dbReference type="GO" id="GO:0046961">
    <property type="term" value="F:proton-transporting ATPase activity, rotational mechanism"/>
    <property type="evidence" value="ECO:0007669"/>
    <property type="project" value="InterPro"/>
</dbReference>
<dbReference type="GO" id="GO:0042777">
    <property type="term" value="P:proton motive force-driven plasma membrane ATP synthesis"/>
    <property type="evidence" value="ECO:0007669"/>
    <property type="project" value="UniProtKB-UniRule"/>
</dbReference>
<dbReference type="Gene3D" id="3.30.2320.30">
    <property type="entry name" value="ATP synthase, E subunit, C-terminal"/>
    <property type="match status" value="1"/>
</dbReference>
<dbReference type="HAMAP" id="MF_00311">
    <property type="entry name" value="ATP_synth_E_arch"/>
    <property type="match status" value="1"/>
</dbReference>
<dbReference type="InterPro" id="IPR038495">
    <property type="entry name" value="ATPase_E_C"/>
</dbReference>
<dbReference type="InterPro" id="IPR002842">
    <property type="entry name" value="ATPase_V1_Esu"/>
</dbReference>
<dbReference type="NCBIfam" id="NF002264">
    <property type="entry name" value="PRK01194.1"/>
    <property type="match status" value="1"/>
</dbReference>
<dbReference type="SUPFAM" id="SSF160527">
    <property type="entry name" value="V-type ATPase subunit E-like"/>
    <property type="match status" value="1"/>
</dbReference>
<accession>Q97CQ3</accession>
<proteinExistence type="inferred from homology"/>
<gene>
    <name evidence="1" type="primary">atpE</name>
    <name type="ordered locus">TV0048</name>
    <name type="ORF">TVG0050546</name>
</gene>
<sequence>MSLEQVIKEIEQSQEIKKKEILENTKNILDKMEAEKKAKIDEIRALYQEKMRAESSRITASIIDKANIEARSILRNKIEEILEGYVSAAQEILRNIRNMPEYPALLNKMIEVAKKYLGQDCIIKVDSKDKAVAPSSGITYSNIDPYGGILASSRDGKVELDLRVSSIMEEVLEKIKVKIYTRLEE</sequence>
<protein>
    <recommendedName>
        <fullName evidence="1">A-type ATP synthase subunit E</fullName>
    </recommendedName>
</protein>
<organism>
    <name type="scientific">Thermoplasma volcanium (strain ATCC 51530 / DSM 4299 / JCM 9571 / NBRC 15438 / GSS1)</name>
    <dbReference type="NCBI Taxonomy" id="273116"/>
    <lineage>
        <taxon>Archaea</taxon>
        <taxon>Methanobacteriati</taxon>
        <taxon>Thermoplasmatota</taxon>
        <taxon>Thermoplasmata</taxon>
        <taxon>Thermoplasmatales</taxon>
        <taxon>Thermoplasmataceae</taxon>
        <taxon>Thermoplasma</taxon>
    </lineage>
</organism>
<keyword id="KW-0066">ATP synthesis</keyword>
<keyword id="KW-1003">Cell membrane</keyword>
<keyword id="KW-0375">Hydrogen ion transport</keyword>
<keyword id="KW-0406">Ion transport</keyword>
<keyword id="KW-0472">Membrane</keyword>
<keyword id="KW-0813">Transport</keyword>
<evidence type="ECO:0000255" key="1">
    <source>
        <dbReference type="HAMAP-Rule" id="MF_00311"/>
    </source>
</evidence>
<evidence type="ECO:0000305" key="2"/>
<comment type="function">
    <text evidence="1">Component of the A-type ATP synthase that produces ATP from ADP in the presence of a proton gradient across the membrane.</text>
</comment>
<comment type="subunit">
    <text evidence="1">Has multiple subunits with at least A(3), B(3), C, D, E, F, H, I and proteolipid K(x).</text>
</comment>
<comment type="subcellular location">
    <subcellularLocation>
        <location evidence="1">Cell membrane</location>
        <topology evidence="1">Peripheral membrane protein</topology>
    </subcellularLocation>
</comment>
<comment type="similarity">
    <text evidence="1">Belongs to the V-ATPase E subunit family.</text>
</comment>
<comment type="sequence caution" evidence="2">
    <conflict type="erroneous initiation">
        <sequence resource="EMBL-CDS" id="BAB59190"/>
    </conflict>
</comment>
<name>AATE_THEVO</name>